<sequence>MAIDLRPFIPFGRGALSQATDPFRAAVEFTLMPMLITNPHLPDNPIVFANPAFLKLTGYEADEVMGRNCRFLQGHGTDPAHVRAIKSAIAAEKPIDIDIINYKKSGEAFWNRLHISPVHNANGRLQHFVSSQLDVTLELSRLVELEKERKTLSIETARSKDQLDYIVEVANIGFWTREFYSGKMTCSAECRRIYGFTPDEPVHFDTILDLVVLEDRMTVVQKAHQAVTGEPYSIEYRIVTRLGETRWLETRAKALTGENPLVLGIVQDVTERKKAEANKALVSREIAHRFKNSMAMVQSIANQTLRNTYDPEQANRLFSERLRALSQAHDMLLKENWAGATIQQICATALAPFNSTFANRIHMSGPHLLVSDRVTVALSLAFYELATNAVKYGALSNEKGVINITWAIMEDKGEKKFHMRWAESRGPEVMQPARRGFGQRLLHSVLAEELKAKCDVEFAASGLLIDVLAPITPEVFPGMGHNVPEQRIA</sequence>
<keyword id="KW-0067">ATP-binding</keyword>
<keyword id="KW-0157">Chromophore</keyword>
<keyword id="KW-0285">Flavoprotein</keyword>
<keyword id="KW-0288">FMN</keyword>
<keyword id="KW-0418">Kinase</keyword>
<keyword id="KW-0547">Nucleotide-binding</keyword>
<keyword id="KW-0597">Phosphoprotein</keyword>
<keyword id="KW-0600">Photoreceptor protein</keyword>
<keyword id="KW-0675">Receptor</keyword>
<keyword id="KW-0677">Repeat</keyword>
<keyword id="KW-0716">Sensory transduction</keyword>
<keyword id="KW-0808">Transferase</keyword>
<keyword id="KW-0843">Virulence</keyword>
<comment type="function">
    <text evidence="1">Photosensitive kinase that is involved in increased bacterial virulence upon exposure to light. Once ejected from an infected animal host, sunlight acts as an environmental signal that increases the virulence of the bacterium, preparing it for infection of the next host. This photoreceptor protein is directly related to the bacterium's survival and replication within host macrophages (By similarity).</text>
</comment>
<comment type="catalytic activity">
    <reaction>
        <text>ATP + protein L-histidine = ADP + protein N-phospho-L-histidine.</text>
        <dbReference type="EC" id="2.7.13.3"/>
    </reaction>
</comment>
<comment type="PTM">
    <text evidence="1">FMN binds covalently to cysteine after exposure to blue light and this bond is spontaneously broken in the dark.</text>
</comment>
<comment type="sequence caution" evidence="4">
    <conflict type="erroneous initiation">
        <sequence resource="EMBL-CDS" id="AAN33777"/>
    </conflict>
</comment>
<comment type="sequence caution" evidence="4">
    <conflict type="erroneous initiation">
        <sequence resource="EMBL-CDS" id="AEM20054"/>
    </conflict>
    <text>Truncated N-terminus.</text>
</comment>
<protein>
    <recommendedName>
        <fullName>Blue-light-activated histidine kinase</fullName>
        <ecNumber>2.7.13.3</ecNumber>
    </recommendedName>
</protein>
<accession>Q8FW73</accession>
<accession>G0KCW6</accession>
<organism>
    <name type="scientific">Brucella suis biovar 1 (strain 1330)</name>
    <dbReference type="NCBI Taxonomy" id="204722"/>
    <lineage>
        <taxon>Bacteria</taxon>
        <taxon>Pseudomonadati</taxon>
        <taxon>Pseudomonadota</taxon>
        <taxon>Alphaproteobacteria</taxon>
        <taxon>Hyphomicrobiales</taxon>
        <taxon>Brucellaceae</taxon>
        <taxon>Brucella/Ochrobactrum group</taxon>
        <taxon>Brucella</taxon>
    </lineage>
</organism>
<proteinExistence type="inferred from homology"/>
<evidence type="ECO:0000250" key="1"/>
<evidence type="ECO:0000255" key="2">
    <source>
        <dbReference type="PROSITE-ProRule" id="PRU00140"/>
    </source>
</evidence>
<evidence type="ECO:0000255" key="3">
    <source>
        <dbReference type="PROSITE-ProRule" id="PRU00141"/>
    </source>
</evidence>
<evidence type="ECO:0000305" key="4"/>
<name>LOVHK_BRUSU</name>
<dbReference type="EC" id="2.7.13.3"/>
<dbReference type="EMBL" id="AE014292">
    <property type="protein sequence ID" value="AAN33777.1"/>
    <property type="status" value="ALT_INIT"/>
    <property type="molecule type" value="Genomic_DNA"/>
</dbReference>
<dbReference type="EMBL" id="CP002998">
    <property type="protein sequence ID" value="AEM20054.1"/>
    <property type="status" value="ALT_INIT"/>
    <property type="molecule type" value="Genomic_DNA"/>
</dbReference>
<dbReference type="RefSeq" id="WP_002971240.1">
    <property type="nucleotide sequence ID" value="NZ_KN046805.1"/>
</dbReference>
<dbReference type="SMR" id="Q8FW73"/>
<dbReference type="KEGG" id="bms:BRA0588"/>
<dbReference type="KEGG" id="bsi:BS1330_II0583"/>
<dbReference type="PATRIC" id="fig|204722.21.peg.552"/>
<dbReference type="HOGENOM" id="CLU_000445_114_57_5"/>
<dbReference type="Proteomes" id="UP000007104">
    <property type="component" value="Chromosome II"/>
</dbReference>
<dbReference type="GO" id="GO:0005524">
    <property type="term" value="F:ATP binding"/>
    <property type="evidence" value="ECO:0007669"/>
    <property type="project" value="UniProtKB-KW"/>
</dbReference>
<dbReference type="GO" id="GO:0009881">
    <property type="term" value="F:photoreceptor activity"/>
    <property type="evidence" value="ECO:0007669"/>
    <property type="project" value="UniProtKB-KW"/>
</dbReference>
<dbReference type="GO" id="GO:0004673">
    <property type="term" value="F:protein histidine kinase activity"/>
    <property type="evidence" value="ECO:0007669"/>
    <property type="project" value="UniProtKB-EC"/>
</dbReference>
<dbReference type="CDD" id="cd00130">
    <property type="entry name" value="PAS"/>
    <property type="match status" value="2"/>
</dbReference>
<dbReference type="Gene3D" id="2.10.70.100">
    <property type="match status" value="1"/>
</dbReference>
<dbReference type="Gene3D" id="3.30.450.20">
    <property type="entry name" value="PAS domain"/>
    <property type="match status" value="2"/>
</dbReference>
<dbReference type="InterPro" id="IPR001610">
    <property type="entry name" value="PAC"/>
</dbReference>
<dbReference type="InterPro" id="IPR000014">
    <property type="entry name" value="PAS"/>
</dbReference>
<dbReference type="InterPro" id="IPR000700">
    <property type="entry name" value="PAS-assoc_C"/>
</dbReference>
<dbReference type="InterPro" id="IPR035965">
    <property type="entry name" value="PAS-like_dom_sf"/>
</dbReference>
<dbReference type="InterPro" id="IPR013655">
    <property type="entry name" value="PAS_fold_3"/>
</dbReference>
<dbReference type="InterPro" id="IPR011102">
    <property type="entry name" value="Sig_transdc_His_kinase_HWE"/>
</dbReference>
<dbReference type="NCBIfam" id="TIGR00229">
    <property type="entry name" value="sensory_box"/>
    <property type="match status" value="2"/>
</dbReference>
<dbReference type="PANTHER" id="PTHR41523:SF7">
    <property type="entry name" value="HISTIDINE KINASE"/>
    <property type="match status" value="1"/>
</dbReference>
<dbReference type="PANTHER" id="PTHR41523">
    <property type="entry name" value="TWO-COMPONENT SYSTEM SENSOR PROTEIN"/>
    <property type="match status" value="1"/>
</dbReference>
<dbReference type="Pfam" id="PF07536">
    <property type="entry name" value="HWE_HK"/>
    <property type="match status" value="1"/>
</dbReference>
<dbReference type="Pfam" id="PF08447">
    <property type="entry name" value="PAS_3"/>
    <property type="match status" value="1"/>
</dbReference>
<dbReference type="Pfam" id="PF13426">
    <property type="entry name" value="PAS_9"/>
    <property type="match status" value="1"/>
</dbReference>
<dbReference type="SMART" id="SM00911">
    <property type="entry name" value="HWE_HK"/>
    <property type="match status" value="1"/>
</dbReference>
<dbReference type="SMART" id="SM00086">
    <property type="entry name" value="PAC"/>
    <property type="match status" value="2"/>
</dbReference>
<dbReference type="SMART" id="SM00091">
    <property type="entry name" value="PAS"/>
    <property type="match status" value="2"/>
</dbReference>
<dbReference type="SUPFAM" id="SSF55785">
    <property type="entry name" value="PYP-like sensor domain (PAS domain)"/>
    <property type="match status" value="2"/>
</dbReference>
<dbReference type="PROSITE" id="PS50113">
    <property type="entry name" value="PAC"/>
    <property type="match status" value="2"/>
</dbReference>
<dbReference type="PROSITE" id="PS50112">
    <property type="entry name" value="PAS"/>
    <property type="match status" value="1"/>
</dbReference>
<feature type="chain" id="PRO_0000361288" description="Blue-light-activated histidine kinase">
    <location>
        <begin position="1"/>
        <end position="489"/>
    </location>
</feature>
<feature type="domain" description="PAS" evidence="2">
    <location>
        <begin position="19"/>
        <end position="93"/>
    </location>
</feature>
<feature type="domain" description="PAC 1" evidence="3">
    <location>
        <begin position="93"/>
        <end position="147"/>
    </location>
</feature>
<feature type="domain" description="PAC 2" evidence="3">
    <location>
        <begin position="232"/>
        <end position="281"/>
    </location>
</feature>
<feature type="region of interest" description="HWE histidine kinase domain">
    <location>
        <begin position="259"/>
        <end position="341"/>
    </location>
</feature>
<feature type="modified residue" description="S-4a-FMN cysteine" evidence="1">
    <location>
        <position position="69"/>
    </location>
</feature>
<feature type="modified residue" description="Phosphohistidine; by autocatalysis" evidence="1">
    <location>
        <position position="288"/>
    </location>
</feature>
<reference key="1">
    <citation type="journal article" date="2002" name="Proc. Natl. Acad. Sci. U.S.A.">
        <title>The Brucella suis genome reveals fundamental similarities between animal and plant pathogens and symbionts.</title>
        <authorList>
            <person name="Paulsen I.T."/>
            <person name="Seshadri R."/>
            <person name="Nelson K.E."/>
            <person name="Eisen J.A."/>
            <person name="Heidelberg J.F."/>
            <person name="Read T.D."/>
            <person name="Dodson R.J."/>
            <person name="Umayam L.A."/>
            <person name="Brinkac L.M."/>
            <person name="Beanan M.J."/>
            <person name="Daugherty S.C."/>
            <person name="DeBoy R.T."/>
            <person name="Durkin A.S."/>
            <person name="Kolonay J.F."/>
            <person name="Madupu R."/>
            <person name="Nelson W.C."/>
            <person name="Ayodeji B."/>
            <person name="Kraul M."/>
            <person name="Shetty J."/>
            <person name="Malek J.A."/>
            <person name="Van Aken S.E."/>
            <person name="Riedmuller S."/>
            <person name="Tettelin H."/>
            <person name="Gill S.R."/>
            <person name="White O."/>
            <person name="Salzberg S.L."/>
            <person name="Hoover D.L."/>
            <person name="Lindler L.E."/>
            <person name="Halling S.M."/>
            <person name="Boyle S.M."/>
            <person name="Fraser C.M."/>
        </authorList>
    </citation>
    <scope>NUCLEOTIDE SEQUENCE [LARGE SCALE GENOMIC DNA]</scope>
    <source>
        <strain>1330</strain>
    </source>
</reference>
<reference key="2">
    <citation type="journal article" date="2011" name="J. Bacteriol.">
        <title>Revised genome sequence of Brucella suis 1330.</title>
        <authorList>
            <person name="Tae H."/>
            <person name="Shallom S."/>
            <person name="Settlage R."/>
            <person name="Preston D."/>
            <person name="Adams L.G."/>
            <person name="Garner H.R."/>
        </authorList>
    </citation>
    <scope>NUCLEOTIDE SEQUENCE [LARGE SCALE GENOMIC DNA]</scope>
    <source>
        <strain>1330</strain>
    </source>
</reference>
<gene>
    <name type="ordered locus">BRA0588</name>
    <name type="ordered locus">BS1330_II0583</name>
</gene>